<accession>B1ZEL4</accession>
<evidence type="ECO:0000255" key="1">
    <source>
        <dbReference type="HAMAP-Rule" id="MF_00206"/>
    </source>
</evidence>
<evidence type="ECO:0000255" key="2">
    <source>
        <dbReference type="PROSITE-ProRule" id="PRU01266"/>
    </source>
</evidence>
<evidence type="ECO:0000256" key="3">
    <source>
        <dbReference type="SAM" id="MobiDB-lite"/>
    </source>
</evidence>
<reference key="1">
    <citation type="submission" date="2008-04" db="EMBL/GenBank/DDBJ databases">
        <title>Complete sequence of chromosome of Methylobacterium populi BJ001.</title>
        <authorList>
            <consortium name="US DOE Joint Genome Institute"/>
            <person name="Copeland A."/>
            <person name="Lucas S."/>
            <person name="Lapidus A."/>
            <person name="Glavina del Rio T."/>
            <person name="Dalin E."/>
            <person name="Tice H."/>
            <person name="Bruce D."/>
            <person name="Goodwin L."/>
            <person name="Pitluck S."/>
            <person name="Chertkov O."/>
            <person name="Brettin T."/>
            <person name="Detter J.C."/>
            <person name="Han C."/>
            <person name="Kuske C.R."/>
            <person name="Schmutz J."/>
            <person name="Larimer F."/>
            <person name="Land M."/>
            <person name="Hauser L."/>
            <person name="Kyrpides N."/>
            <person name="Mikhailova N."/>
            <person name="Marx C."/>
            <person name="Richardson P."/>
        </authorList>
    </citation>
    <scope>NUCLEOTIDE SEQUENCE [LARGE SCALE GENOMIC DNA]</scope>
    <source>
        <strain>ATCC BAA-705 / NCIMB 13946 / BJ001</strain>
    </source>
</reference>
<organism>
    <name type="scientific">Methylorubrum populi (strain ATCC BAA-705 / NCIMB 13946 / BJ001)</name>
    <name type="common">Methylobacterium populi</name>
    <dbReference type="NCBI Taxonomy" id="441620"/>
    <lineage>
        <taxon>Bacteria</taxon>
        <taxon>Pseudomonadati</taxon>
        <taxon>Pseudomonadota</taxon>
        <taxon>Alphaproteobacteria</taxon>
        <taxon>Hyphomicrobiales</taxon>
        <taxon>Methylobacteriaceae</taxon>
        <taxon>Methylorubrum</taxon>
    </lineage>
</organism>
<protein>
    <recommendedName>
        <fullName evidence="1">Lipoyl synthase</fullName>
        <ecNumber evidence="1">2.8.1.8</ecNumber>
    </recommendedName>
    <alternativeName>
        <fullName evidence="1">Lip-syn</fullName>
        <shortName evidence="1">LS</shortName>
    </alternativeName>
    <alternativeName>
        <fullName evidence="1">Lipoate synthase</fullName>
    </alternativeName>
    <alternativeName>
        <fullName evidence="1">Lipoic acid synthase</fullName>
    </alternativeName>
    <alternativeName>
        <fullName evidence="1">Sulfur insertion protein LipA</fullName>
    </alternativeName>
</protein>
<dbReference type="EC" id="2.8.1.8" evidence="1"/>
<dbReference type="EMBL" id="CP001029">
    <property type="protein sequence ID" value="ACB81078.1"/>
    <property type="molecule type" value="Genomic_DNA"/>
</dbReference>
<dbReference type="RefSeq" id="WP_012454798.1">
    <property type="nucleotide sequence ID" value="NC_010725.1"/>
</dbReference>
<dbReference type="SMR" id="B1ZEL4"/>
<dbReference type="STRING" id="441620.Mpop_2923"/>
<dbReference type="KEGG" id="mpo:Mpop_2923"/>
<dbReference type="eggNOG" id="COG0320">
    <property type="taxonomic scope" value="Bacteria"/>
</dbReference>
<dbReference type="HOGENOM" id="CLU_033144_2_1_5"/>
<dbReference type="OrthoDB" id="9787898at2"/>
<dbReference type="UniPathway" id="UPA00538">
    <property type="reaction ID" value="UER00593"/>
</dbReference>
<dbReference type="Proteomes" id="UP000007136">
    <property type="component" value="Chromosome"/>
</dbReference>
<dbReference type="GO" id="GO:0005737">
    <property type="term" value="C:cytoplasm"/>
    <property type="evidence" value="ECO:0007669"/>
    <property type="project" value="UniProtKB-SubCell"/>
</dbReference>
<dbReference type="GO" id="GO:0051539">
    <property type="term" value="F:4 iron, 4 sulfur cluster binding"/>
    <property type="evidence" value="ECO:0007669"/>
    <property type="project" value="UniProtKB-UniRule"/>
</dbReference>
<dbReference type="GO" id="GO:0016992">
    <property type="term" value="F:lipoate synthase activity"/>
    <property type="evidence" value="ECO:0007669"/>
    <property type="project" value="UniProtKB-UniRule"/>
</dbReference>
<dbReference type="GO" id="GO:0046872">
    <property type="term" value="F:metal ion binding"/>
    <property type="evidence" value="ECO:0007669"/>
    <property type="project" value="UniProtKB-KW"/>
</dbReference>
<dbReference type="CDD" id="cd01335">
    <property type="entry name" value="Radical_SAM"/>
    <property type="match status" value="1"/>
</dbReference>
<dbReference type="FunFam" id="3.20.20.70:FF:000040">
    <property type="entry name" value="Lipoyl synthase"/>
    <property type="match status" value="1"/>
</dbReference>
<dbReference type="Gene3D" id="3.20.20.70">
    <property type="entry name" value="Aldolase class I"/>
    <property type="match status" value="1"/>
</dbReference>
<dbReference type="HAMAP" id="MF_00206">
    <property type="entry name" value="Lipoyl_synth"/>
    <property type="match status" value="1"/>
</dbReference>
<dbReference type="InterPro" id="IPR013785">
    <property type="entry name" value="Aldolase_TIM"/>
</dbReference>
<dbReference type="InterPro" id="IPR006638">
    <property type="entry name" value="Elp3/MiaA/NifB-like_rSAM"/>
</dbReference>
<dbReference type="InterPro" id="IPR031691">
    <property type="entry name" value="LIAS_N"/>
</dbReference>
<dbReference type="InterPro" id="IPR003698">
    <property type="entry name" value="Lipoyl_synth"/>
</dbReference>
<dbReference type="InterPro" id="IPR007197">
    <property type="entry name" value="rSAM"/>
</dbReference>
<dbReference type="NCBIfam" id="TIGR00510">
    <property type="entry name" value="lipA"/>
    <property type="match status" value="1"/>
</dbReference>
<dbReference type="NCBIfam" id="NF004019">
    <property type="entry name" value="PRK05481.1"/>
    <property type="match status" value="1"/>
</dbReference>
<dbReference type="NCBIfam" id="NF009544">
    <property type="entry name" value="PRK12928.1"/>
    <property type="match status" value="1"/>
</dbReference>
<dbReference type="PANTHER" id="PTHR10949">
    <property type="entry name" value="LIPOYL SYNTHASE"/>
    <property type="match status" value="1"/>
</dbReference>
<dbReference type="PANTHER" id="PTHR10949:SF0">
    <property type="entry name" value="LIPOYL SYNTHASE, MITOCHONDRIAL"/>
    <property type="match status" value="1"/>
</dbReference>
<dbReference type="Pfam" id="PF16881">
    <property type="entry name" value="LIAS_N"/>
    <property type="match status" value="1"/>
</dbReference>
<dbReference type="Pfam" id="PF04055">
    <property type="entry name" value="Radical_SAM"/>
    <property type="match status" value="1"/>
</dbReference>
<dbReference type="PIRSF" id="PIRSF005963">
    <property type="entry name" value="Lipoyl_synth"/>
    <property type="match status" value="1"/>
</dbReference>
<dbReference type="SFLD" id="SFLDF00271">
    <property type="entry name" value="lipoyl_synthase"/>
    <property type="match status" value="1"/>
</dbReference>
<dbReference type="SFLD" id="SFLDS00029">
    <property type="entry name" value="Radical_SAM"/>
    <property type="match status" value="1"/>
</dbReference>
<dbReference type="SMART" id="SM00729">
    <property type="entry name" value="Elp3"/>
    <property type="match status" value="1"/>
</dbReference>
<dbReference type="SUPFAM" id="SSF102114">
    <property type="entry name" value="Radical SAM enzymes"/>
    <property type="match status" value="1"/>
</dbReference>
<dbReference type="PROSITE" id="PS51918">
    <property type="entry name" value="RADICAL_SAM"/>
    <property type="match status" value="1"/>
</dbReference>
<proteinExistence type="inferred from homology"/>
<feature type="chain" id="PRO_1000099612" description="Lipoyl synthase">
    <location>
        <begin position="1"/>
        <end position="334"/>
    </location>
</feature>
<feature type="domain" description="Radical SAM core" evidence="2">
    <location>
        <begin position="80"/>
        <end position="296"/>
    </location>
</feature>
<feature type="region of interest" description="Disordered" evidence="3">
    <location>
        <begin position="8"/>
        <end position="33"/>
    </location>
</feature>
<feature type="compositionally biased region" description="Basic and acidic residues" evidence="3">
    <location>
        <begin position="12"/>
        <end position="33"/>
    </location>
</feature>
<feature type="binding site" evidence="1">
    <location>
        <position position="68"/>
    </location>
    <ligand>
        <name>[4Fe-4S] cluster</name>
        <dbReference type="ChEBI" id="CHEBI:49883"/>
        <label>1</label>
    </ligand>
</feature>
<feature type="binding site" evidence="1">
    <location>
        <position position="73"/>
    </location>
    <ligand>
        <name>[4Fe-4S] cluster</name>
        <dbReference type="ChEBI" id="CHEBI:49883"/>
        <label>1</label>
    </ligand>
</feature>
<feature type="binding site" evidence="1">
    <location>
        <position position="79"/>
    </location>
    <ligand>
        <name>[4Fe-4S] cluster</name>
        <dbReference type="ChEBI" id="CHEBI:49883"/>
        <label>1</label>
    </ligand>
</feature>
<feature type="binding site" evidence="1">
    <location>
        <position position="94"/>
    </location>
    <ligand>
        <name>[4Fe-4S] cluster</name>
        <dbReference type="ChEBI" id="CHEBI:49883"/>
        <label>2</label>
        <note>4Fe-4S-S-AdoMet</note>
    </ligand>
</feature>
<feature type="binding site" evidence="1">
    <location>
        <position position="98"/>
    </location>
    <ligand>
        <name>[4Fe-4S] cluster</name>
        <dbReference type="ChEBI" id="CHEBI:49883"/>
        <label>2</label>
        <note>4Fe-4S-S-AdoMet</note>
    </ligand>
</feature>
<feature type="binding site" evidence="1">
    <location>
        <position position="101"/>
    </location>
    <ligand>
        <name>[4Fe-4S] cluster</name>
        <dbReference type="ChEBI" id="CHEBI:49883"/>
        <label>2</label>
        <note>4Fe-4S-S-AdoMet</note>
    </ligand>
</feature>
<feature type="binding site" evidence="1">
    <location>
        <position position="307"/>
    </location>
    <ligand>
        <name>[4Fe-4S] cluster</name>
        <dbReference type="ChEBI" id="CHEBI:49883"/>
        <label>1</label>
    </ligand>
</feature>
<keyword id="KW-0004">4Fe-4S</keyword>
<keyword id="KW-0963">Cytoplasm</keyword>
<keyword id="KW-0408">Iron</keyword>
<keyword id="KW-0411">Iron-sulfur</keyword>
<keyword id="KW-0479">Metal-binding</keyword>
<keyword id="KW-0949">S-adenosyl-L-methionine</keyword>
<keyword id="KW-0808">Transferase</keyword>
<gene>
    <name evidence="1" type="primary">lipA</name>
    <name type="ordered locus">Mpop_2923</name>
</gene>
<comment type="function">
    <text evidence="1">Catalyzes the radical-mediated insertion of two sulfur atoms into the C-6 and C-8 positions of the octanoyl moiety bound to the lipoyl domains of lipoate-dependent enzymes, thereby converting the octanoylated domains into lipoylated derivatives.</text>
</comment>
<comment type="catalytic activity">
    <reaction evidence="1">
        <text>[[Fe-S] cluster scaffold protein carrying a second [4Fe-4S](2+) cluster] + N(6)-octanoyl-L-lysyl-[protein] + 2 oxidized [2Fe-2S]-[ferredoxin] + 2 S-adenosyl-L-methionine + 4 H(+) = [[Fe-S] cluster scaffold protein] + N(6)-[(R)-dihydrolipoyl]-L-lysyl-[protein] + 4 Fe(3+) + 2 hydrogen sulfide + 2 5'-deoxyadenosine + 2 L-methionine + 2 reduced [2Fe-2S]-[ferredoxin]</text>
        <dbReference type="Rhea" id="RHEA:16585"/>
        <dbReference type="Rhea" id="RHEA-COMP:9928"/>
        <dbReference type="Rhea" id="RHEA-COMP:10000"/>
        <dbReference type="Rhea" id="RHEA-COMP:10001"/>
        <dbReference type="Rhea" id="RHEA-COMP:10475"/>
        <dbReference type="Rhea" id="RHEA-COMP:14568"/>
        <dbReference type="Rhea" id="RHEA-COMP:14569"/>
        <dbReference type="ChEBI" id="CHEBI:15378"/>
        <dbReference type="ChEBI" id="CHEBI:17319"/>
        <dbReference type="ChEBI" id="CHEBI:29034"/>
        <dbReference type="ChEBI" id="CHEBI:29919"/>
        <dbReference type="ChEBI" id="CHEBI:33722"/>
        <dbReference type="ChEBI" id="CHEBI:33737"/>
        <dbReference type="ChEBI" id="CHEBI:33738"/>
        <dbReference type="ChEBI" id="CHEBI:57844"/>
        <dbReference type="ChEBI" id="CHEBI:59789"/>
        <dbReference type="ChEBI" id="CHEBI:78809"/>
        <dbReference type="ChEBI" id="CHEBI:83100"/>
        <dbReference type="EC" id="2.8.1.8"/>
    </reaction>
</comment>
<comment type="cofactor">
    <cofactor evidence="1">
        <name>[4Fe-4S] cluster</name>
        <dbReference type="ChEBI" id="CHEBI:49883"/>
    </cofactor>
    <text evidence="1">Binds 2 [4Fe-4S] clusters per subunit. One cluster is coordinated with 3 cysteines and an exchangeable S-adenosyl-L-methionine.</text>
</comment>
<comment type="pathway">
    <text evidence="1">Protein modification; protein lipoylation via endogenous pathway; protein N(6)-(lipoyl)lysine from octanoyl-[acyl-carrier-protein]: step 2/2.</text>
</comment>
<comment type="subcellular location">
    <subcellularLocation>
        <location evidence="1">Cytoplasm</location>
    </subcellularLocation>
</comment>
<comment type="similarity">
    <text evidence="1">Belongs to the radical SAM superfamily. Lipoyl synthase family.</text>
</comment>
<sequence>MAVVLDLLNNDTRPKVEAPARPRHPEKAHRPDTAIQRKPDWIRVKAPGSKLWAETKDIVRANNLVTVCEEAGCPNIGECWEKRHATFMIMGDTCTRACAFCNVRTGLPESLDAAEPEKVADAVAKLGLHHVVVTSVDRDDLKDGGAEHFSRTIAAIRRASPGTTVEILTPDFLRKPGALEVVVAAKPDVFNHNLETVPGKYVTVRPGARYFHSVRLLQRVKELDPTIFTKSGIMVGLGEERNEVVQLMDDLRSAEVDFLTIGQYLQPTRKHHEVVRFVPPDEFKAYETTAYAKGFLLVSATPLTRSSHHAGEDFARLKAARLAKLGPAPVAVNA</sequence>
<name>LIPA_METPB</name>